<feature type="chain" id="PRO_0000177339" description="Large ribosomal subunit protein bL35">
    <location>
        <begin position="1"/>
        <end position="65"/>
    </location>
</feature>
<proteinExistence type="inferred from homology"/>
<protein>
    <recommendedName>
        <fullName evidence="1">Large ribosomal subunit protein bL35</fullName>
    </recommendedName>
    <alternativeName>
        <fullName evidence="2">50S ribosomal protein L35</fullName>
    </alternativeName>
</protein>
<name>RL35_BUCAI</name>
<dbReference type="EMBL" id="BA000003">
    <property type="protein sequence ID" value="BAB12845.1"/>
    <property type="molecule type" value="Genomic_DNA"/>
</dbReference>
<dbReference type="RefSeq" id="NP_239959.1">
    <property type="nucleotide sequence ID" value="NC_002528.1"/>
</dbReference>
<dbReference type="RefSeq" id="WP_009874083.1">
    <property type="nucleotide sequence ID" value="NZ_AP036055.1"/>
</dbReference>
<dbReference type="SMR" id="P57227"/>
<dbReference type="STRING" id="563178.BUAP5A_125"/>
<dbReference type="EnsemblBacteria" id="BAB12845">
    <property type="protein sequence ID" value="BAB12845"/>
    <property type="gene ID" value="BAB12845"/>
</dbReference>
<dbReference type="KEGG" id="buc:BU127"/>
<dbReference type="PATRIC" id="fig|107806.10.peg.136"/>
<dbReference type="eggNOG" id="COG0291">
    <property type="taxonomic scope" value="Bacteria"/>
</dbReference>
<dbReference type="HOGENOM" id="CLU_169643_1_1_6"/>
<dbReference type="Proteomes" id="UP000001806">
    <property type="component" value="Chromosome"/>
</dbReference>
<dbReference type="GO" id="GO:0022625">
    <property type="term" value="C:cytosolic large ribosomal subunit"/>
    <property type="evidence" value="ECO:0007669"/>
    <property type="project" value="TreeGrafter"/>
</dbReference>
<dbReference type="GO" id="GO:0003735">
    <property type="term" value="F:structural constituent of ribosome"/>
    <property type="evidence" value="ECO:0007669"/>
    <property type="project" value="InterPro"/>
</dbReference>
<dbReference type="GO" id="GO:0006412">
    <property type="term" value="P:translation"/>
    <property type="evidence" value="ECO:0007669"/>
    <property type="project" value="UniProtKB-UniRule"/>
</dbReference>
<dbReference type="FunFam" id="4.10.410.60:FF:000001">
    <property type="entry name" value="50S ribosomal protein L35"/>
    <property type="match status" value="1"/>
</dbReference>
<dbReference type="Gene3D" id="4.10.410.60">
    <property type="match status" value="1"/>
</dbReference>
<dbReference type="HAMAP" id="MF_00514">
    <property type="entry name" value="Ribosomal_bL35"/>
    <property type="match status" value="1"/>
</dbReference>
<dbReference type="InterPro" id="IPR001706">
    <property type="entry name" value="Ribosomal_bL35"/>
</dbReference>
<dbReference type="InterPro" id="IPR021137">
    <property type="entry name" value="Ribosomal_bL35-like"/>
</dbReference>
<dbReference type="InterPro" id="IPR018265">
    <property type="entry name" value="Ribosomal_bL35_CS"/>
</dbReference>
<dbReference type="InterPro" id="IPR037229">
    <property type="entry name" value="Ribosomal_bL35_sf"/>
</dbReference>
<dbReference type="NCBIfam" id="TIGR00001">
    <property type="entry name" value="rpmI_bact"/>
    <property type="match status" value="1"/>
</dbReference>
<dbReference type="PANTHER" id="PTHR33343">
    <property type="entry name" value="54S RIBOSOMAL PROTEIN BL35M"/>
    <property type="match status" value="1"/>
</dbReference>
<dbReference type="PANTHER" id="PTHR33343:SF1">
    <property type="entry name" value="LARGE RIBOSOMAL SUBUNIT PROTEIN BL35M"/>
    <property type="match status" value="1"/>
</dbReference>
<dbReference type="Pfam" id="PF01632">
    <property type="entry name" value="Ribosomal_L35p"/>
    <property type="match status" value="1"/>
</dbReference>
<dbReference type="PRINTS" id="PR00064">
    <property type="entry name" value="RIBOSOMALL35"/>
</dbReference>
<dbReference type="SUPFAM" id="SSF143034">
    <property type="entry name" value="L35p-like"/>
    <property type="match status" value="1"/>
</dbReference>
<dbReference type="PROSITE" id="PS00936">
    <property type="entry name" value="RIBOSOMAL_L35"/>
    <property type="match status" value="1"/>
</dbReference>
<reference key="1">
    <citation type="journal article" date="2000" name="Nature">
        <title>Genome sequence of the endocellular bacterial symbiont of aphids Buchnera sp. APS.</title>
        <authorList>
            <person name="Shigenobu S."/>
            <person name="Watanabe H."/>
            <person name="Hattori M."/>
            <person name="Sakaki Y."/>
            <person name="Ishikawa H."/>
        </authorList>
    </citation>
    <scope>NUCLEOTIDE SEQUENCE [LARGE SCALE GENOMIC DNA]</scope>
    <source>
        <strain>APS</strain>
    </source>
</reference>
<gene>
    <name evidence="1" type="primary">rpmI</name>
    <name type="ordered locus">BU127</name>
</gene>
<keyword id="KW-1185">Reference proteome</keyword>
<keyword id="KW-0687">Ribonucleoprotein</keyword>
<keyword id="KW-0689">Ribosomal protein</keyword>
<organism>
    <name type="scientific">Buchnera aphidicola subsp. Acyrthosiphon pisum (strain APS)</name>
    <name type="common">Acyrthosiphon pisum symbiotic bacterium</name>
    <dbReference type="NCBI Taxonomy" id="107806"/>
    <lineage>
        <taxon>Bacteria</taxon>
        <taxon>Pseudomonadati</taxon>
        <taxon>Pseudomonadota</taxon>
        <taxon>Gammaproteobacteria</taxon>
        <taxon>Enterobacterales</taxon>
        <taxon>Erwiniaceae</taxon>
        <taxon>Buchnera</taxon>
    </lineage>
</organism>
<comment type="similarity">
    <text evidence="1">Belongs to the bacterial ribosomal protein bL35 family.</text>
</comment>
<evidence type="ECO:0000255" key="1">
    <source>
        <dbReference type="HAMAP-Rule" id="MF_00514"/>
    </source>
</evidence>
<evidence type="ECO:0000305" key="2"/>
<accession>P57227</accession>
<sequence length="65" mass="7510">MPKIKTLKSAAKRFKITASGKFKRKQANLRHILTKKTTTKKRHLRPKILVSTGDMDRVKSFLPYA</sequence>